<gene>
    <name evidence="1" type="primary">miaB</name>
    <name type="ordered locus">XOO2766</name>
</gene>
<keyword id="KW-0004">4Fe-4S</keyword>
<keyword id="KW-0963">Cytoplasm</keyword>
<keyword id="KW-0408">Iron</keyword>
<keyword id="KW-0411">Iron-sulfur</keyword>
<keyword id="KW-0479">Metal-binding</keyword>
<keyword id="KW-1185">Reference proteome</keyword>
<keyword id="KW-0949">S-adenosyl-L-methionine</keyword>
<keyword id="KW-0808">Transferase</keyword>
<keyword id="KW-0819">tRNA processing</keyword>
<reference key="1">
    <citation type="journal article" date="2005" name="Nucleic Acids Res.">
        <title>The genome sequence of Xanthomonas oryzae pathovar oryzae KACC10331, the bacterial blight pathogen of rice.</title>
        <authorList>
            <person name="Lee B.-M."/>
            <person name="Park Y.-J."/>
            <person name="Park D.-S."/>
            <person name="Kang H.-W."/>
            <person name="Kim J.-G."/>
            <person name="Song E.-S."/>
            <person name="Park I.-C."/>
            <person name="Yoon U.-H."/>
            <person name="Hahn J.-H."/>
            <person name="Koo B.-S."/>
            <person name="Lee G.-B."/>
            <person name="Kim H."/>
            <person name="Park H.-S."/>
            <person name="Yoon K.-O."/>
            <person name="Kim J.-H."/>
            <person name="Jung C.-H."/>
            <person name="Koh N.-H."/>
            <person name="Seo J.-S."/>
            <person name="Go S.-J."/>
        </authorList>
    </citation>
    <scope>NUCLEOTIDE SEQUENCE [LARGE SCALE GENOMIC DNA]</scope>
    <source>
        <strain>KACC10331 / KXO85</strain>
    </source>
</reference>
<proteinExistence type="inferred from homology"/>
<evidence type="ECO:0000255" key="1">
    <source>
        <dbReference type="HAMAP-Rule" id="MF_01864"/>
    </source>
</evidence>
<evidence type="ECO:0000255" key="2">
    <source>
        <dbReference type="PROSITE-ProRule" id="PRU01266"/>
    </source>
</evidence>
<evidence type="ECO:0000256" key="3">
    <source>
        <dbReference type="SAM" id="MobiDB-lite"/>
    </source>
</evidence>
<evidence type="ECO:0000305" key="4"/>
<accession>Q5GZ51</accession>
<feature type="chain" id="PRO_0000374647" description="tRNA-2-methylthio-N(6)-dimethylallyladenosine synthase">
    <location>
        <begin position="1"/>
        <end position="484"/>
    </location>
</feature>
<feature type="domain" description="MTTase N-terminal" evidence="1">
    <location>
        <begin position="36"/>
        <end position="153"/>
    </location>
</feature>
<feature type="domain" description="Radical SAM core" evidence="2">
    <location>
        <begin position="176"/>
        <end position="415"/>
    </location>
</feature>
<feature type="domain" description="TRAM" evidence="1">
    <location>
        <begin position="416"/>
        <end position="479"/>
    </location>
</feature>
<feature type="region of interest" description="Disordered" evidence="3">
    <location>
        <begin position="428"/>
        <end position="450"/>
    </location>
</feature>
<feature type="binding site" evidence="1">
    <location>
        <position position="45"/>
    </location>
    <ligand>
        <name>[4Fe-4S] cluster</name>
        <dbReference type="ChEBI" id="CHEBI:49883"/>
        <label>1</label>
    </ligand>
</feature>
<feature type="binding site" evidence="1">
    <location>
        <position position="82"/>
    </location>
    <ligand>
        <name>[4Fe-4S] cluster</name>
        <dbReference type="ChEBI" id="CHEBI:49883"/>
        <label>1</label>
    </ligand>
</feature>
<feature type="binding site" evidence="1">
    <location>
        <position position="116"/>
    </location>
    <ligand>
        <name>[4Fe-4S] cluster</name>
        <dbReference type="ChEBI" id="CHEBI:49883"/>
        <label>1</label>
    </ligand>
</feature>
<feature type="binding site" evidence="1">
    <location>
        <position position="190"/>
    </location>
    <ligand>
        <name>[4Fe-4S] cluster</name>
        <dbReference type="ChEBI" id="CHEBI:49883"/>
        <label>2</label>
        <note>4Fe-4S-S-AdoMet</note>
    </ligand>
</feature>
<feature type="binding site" evidence="1">
    <location>
        <position position="194"/>
    </location>
    <ligand>
        <name>[4Fe-4S] cluster</name>
        <dbReference type="ChEBI" id="CHEBI:49883"/>
        <label>2</label>
        <note>4Fe-4S-S-AdoMet</note>
    </ligand>
</feature>
<feature type="binding site" evidence="1">
    <location>
        <position position="197"/>
    </location>
    <ligand>
        <name>[4Fe-4S] cluster</name>
        <dbReference type="ChEBI" id="CHEBI:49883"/>
        <label>2</label>
        <note>4Fe-4S-S-AdoMet</note>
    </ligand>
</feature>
<sequence>MPGTSVSDLSTATAVDAPALLPLPVARPSAPAVVRGKLYIKTHGCQMNEYDSAKMADVLAASEGLELTDNPEEADVVLVNTCSIREKAQEKVFSQLGRWKALKAGGKPVIIGVGGCVASQEGEAIVKRAPYVDLVFGPQTLHRLPELIRARRESGKSQVDISFPEIEKFDRLPEPRAEGPSAFVSIMEGCSKYCSFCVVPYTRGEEVSRPFEDVLVEVAQLAAQGVREINLLGQNVNAYRGAYGADAGDPAQYADLGLLIRTIAQIEGIGRIRFTTSHPLEFSDSLVDAYRDVPQLANYLHLPVQAGSDRILSAMKRGYTALEFKSRIRKLRAVRPDISISSDFIVGFPGETEADFEKTMKLIEDVGFDQSFSFVYSRRPGTPASDLQDDTPETVKQARLARLQAHISAHAASISQSMVGSVQRVLVEGPSRRDPNELTGKSENMRPVNFPGNPRLIGQFVDVLITEAMSNSLRGRIQLDDSAH</sequence>
<organism>
    <name type="scientific">Xanthomonas oryzae pv. oryzae (strain KACC10331 / KXO85)</name>
    <dbReference type="NCBI Taxonomy" id="291331"/>
    <lineage>
        <taxon>Bacteria</taxon>
        <taxon>Pseudomonadati</taxon>
        <taxon>Pseudomonadota</taxon>
        <taxon>Gammaproteobacteria</taxon>
        <taxon>Lysobacterales</taxon>
        <taxon>Lysobacteraceae</taxon>
        <taxon>Xanthomonas</taxon>
    </lineage>
</organism>
<dbReference type="EC" id="2.8.4.3" evidence="1"/>
<dbReference type="EMBL" id="AE013598">
    <property type="protein sequence ID" value="AAW76020.1"/>
    <property type="status" value="ALT_INIT"/>
    <property type="molecule type" value="Genomic_DNA"/>
</dbReference>
<dbReference type="SMR" id="Q5GZ51"/>
<dbReference type="STRING" id="291331.XOO2766"/>
<dbReference type="KEGG" id="xoo:XOO2766"/>
<dbReference type="PATRIC" id="fig|291331.8.peg.3059"/>
<dbReference type="HOGENOM" id="CLU_018697_2_0_6"/>
<dbReference type="Proteomes" id="UP000006735">
    <property type="component" value="Chromosome"/>
</dbReference>
<dbReference type="GO" id="GO:0005829">
    <property type="term" value="C:cytosol"/>
    <property type="evidence" value="ECO:0007669"/>
    <property type="project" value="TreeGrafter"/>
</dbReference>
<dbReference type="GO" id="GO:0051539">
    <property type="term" value="F:4 iron, 4 sulfur cluster binding"/>
    <property type="evidence" value="ECO:0007669"/>
    <property type="project" value="UniProtKB-UniRule"/>
</dbReference>
<dbReference type="GO" id="GO:0046872">
    <property type="term" value="F:metal ion binding"/>
    <property type="evidence" value="ECO:0007669"/>
    <property type="project" value="UniProtKB-KW"/>
</dbReference>
<dbReference type="GO" id="GO:0035597">
    <property type="term" value="F:N6-isopentenyladenosine methylthiotransferase activity"/>
    <property type="evidence" value="ECO:0007669"/>
    <property type="project" value="TreeGrafter"/>
</dbReference>
<dbReference type="CDD" id="cd01335">
    <property type="entry name" value="Radical_SAM"/>
    <property type="match status" value="1"/>
</dbReference>
<dbReference type="FunFam" id="3.40.50.12160:FF:000001">
    <property type="entry name" value="tRNA-2-methylthio-N(6)-dimethylallyladenosine synthase"/>
    <property type="match status" value="1"/>
</dbReference>
<dbReference type="FunFam" id="3.80.30.20:FF:000001">
    <property type="entry name" value="tRNA-2-methylthio-N(6)-dimethylallyladenosine synthase 2"/>
    <property type="match status" value="1"/>
</dbReference>
<dbReference type="Gene3D" id="3.40.50.12160">
    <property type="entry name" value="Methylthiotransferase, N-terminal domain"/>
    <property type="match status" value="1"/>
</dbReference>
<dbReference type="Gene3D" id="3.80.30.20">
    <property type="entry name" value="tm_1862 like domain"/>
    <property type="match status" value="1"/>
</dbReference>
<dbReference type="HAMAP" id="MF_01864">
    <property type="entry name" value="tRNA_metthiotr_MiaB"/>
    <property type="match status" value="1"/>
</dbReference>
<dbReference type="InterPro" id="IPR006638">
    <property type="entry name" value="Elp3/MiaA/NifB-like_rSAM"/>
</dbReference>
<dbReference type="InterPro" id="IPR005839">
    <property type="entry name" value="Methylthiotransferase"/>
</dbReference>
<dbReference type="InterPro" id="IPR020612">
    <property type="entry name" value="Methylthiotransferase_CS"/>
</dbReference>
<dbReference type="InterPro" id="IPR013848">
    <property type="entry name" value="Methylthiotransferase_N"/>
</dbReference>
<dbReference type="InterPro" id="IPR038135">
    <property type="entry name" value="Methylthiotransferase_N_sf"/>
</dbReference>
<dbReference type="InterPro" id="IPR006463">
    <property type="entry name" value="MiaB_methiolase"/>
</dbReference>
<dbReference type="InterPro" id="IPR007197">
    <property type="entry name" value="rSAM"/>
</dbReference>
<dbReference type="InterPro" id="IPR023404">
    <property type="entry name" value="rSAM_horseshoe"/>
</dbReference>
<dbReference type="InterPro" id="IPR002792">
    <property type="entry name" value="TRAM_dom"/>
</dbReference>
<dbReference type="NCBIfam" id="TIGR01574">
    <property type="entry name" value="miaB-methiolase"/>
    <property type="match status" value="1"/>
</dbReference>
<dbReference type="NCBIfam" id="TIGR00089">
    <property type="entry name" value="MiaB/RimO family radical SAM methylthiotransferase"/>
    <property type="match status" value="1"/>
</dbReference>
<dbReference type="PANTHER" id="PTHR43020">
    <property type="entry name" value="CDK5 REGULATORY SUBUNIT-ASSOCIATED PROTEIN 1"/>
    <property type="match status" value="1"/>
</dbReference>
<dbReference type="PANTHER" id="PTHR43020:SF2">
    <property type="entry name" value="MITOCHONDRIAL TRNA METHYLTHIOTRANSFERASE CDK5RAP1"/>
    <property type="match status" value="1"/>
</dbReference>
<dbReference type="Pfam" id="PF04055">
    <property type="entry name" value="Radical_SAM"/>
    <property type="match status" value="1"/>
</dbReference>
<dbReference type="Pfam" id="PF01938">
    <property type="entry name" value="TRAM"/>
    <property type="match status" value="1"/>
</dbReference>
<dbReference type="Pfam" id="PF00919">
    <property type="entry name" value="UPF0004"/>
    <property type="match status" value="1"/>
</dbReference>
<dbReference type="SFLD" id="SFLDF00273">
    <property type="entry name" value="(dimethylallyl)adenosine_tRNA"/>
    <property type="match status" value="1"/>
</dbReference>
<dbReference type="SFLD" id="SFLDG01082">
    <property type="entry name" value="B12-binding_domain_containing"/>
    <property type="match status" value="1"/>
</dbReference>
<dbReference type="SFLD" id="SFLDS00029">
    <property type="entry name" value="Radical_SAM"/>
    <property type="match status" value="1"/>
</dbReference>
<dbReference type="SMART" id="SM00729">
    <property type="entry name" value="Elp3"/>
    <property type="match status" value="1"/>
</dbReference>
<dbReference type="SUPFAM" id="SSF102114">
    <property type="entry name" value="Radical SAM enzymes"/>
    <property type="match status" value="1"/>
</dbReference>
<dbReference type="PROSITE" id="PS51449">
    <property type="entry name" value="MTTASE_N"/>
    <property type="match status" value="1"/>
</dbReference>
<dbReference type="PROSITE" id="PS01278">
    <property type="entry name" value="MTTASE_RADICAL"/>
    <property type="match status" value="1"/>
</dbReference>
<dbReference type="PROSITE" id="PS51918">
    <property type="entry name" value="RADICAL_SAM"/>
    <property type="match status" value="1"/>
</dbReference>
<dbReference type="PROSITE" id="PS50926">
    <property type="entry name" value="TRAM"/>
    <property type="match status" value="1"/>
</dbReference>
<comment type="function">
    <text evidence="1">Catalyzes the methylthiolation of N6-(dimethylallyl)adenosine (i(6)A), leading to the formation of 2-methylthio-N6-(dimethylallyl)adenosine (ms(2)i(6)A) at position 37 in tRNAs that read codons beginning with uridine.</text>
</comment>
<comment type="catalytic activity">
    <reaction evidence="1">
        <text>N(6)-dimethylallyladenosine(37) in tRNA + (sulfur carrier)-SH + AH2 + 2 S-adenosyl-L-methionine = 2-methylsulfanyl-N(6)-dimethylallyladenosine(37) in tRNA + (sulfur carrier)-H + 5'-deoxyadenosine + L-methionine + A + S-adenosyl-L-homocysteine + 2 H(+)</text>
        <dbReference type="Rhea" id="RHEA:37067"/>
        <dbReference type="Rhea" id="RHEA-COMP:10375"/>
        <dbReference type="Rhea" id="RHEA-COMP:10376"/>
        <dbReference type="Rhea" id="RHEA-COMP:14737"/>
        <dbReference type="Rhea" id="RHEA-COMP:14739"/>
        <dbReference type="ChEBI" id="CHEBI:13193"/>
        <dbReference type="ChEBI" id="CHEBI:15378"/>
        <dbReference type="ChEBI" id="CHEBI:17319"/>
        <dbReference type="ChEBI" id="CHEBI:17499"/>
        <dbReference type="ChEBI" id="CHEBI:29917"/>
        <dbReference type="ChEBI" id="CHEBI:57844"/>
        <dbReference type="ChEBI" id="CHEBI:57856"/>
        <dbReference type="ChEBI" id="CHEBI:59789"/>
        <dbReference type="ChEBI" id="CHEBI:64428"/>
        <dbReference type="ChEBI" id="CHEBI:74415"/>
        <dbReference type="ChEBI" id="CHEBI:74417"/>
        <dbReference type="EC" id="2.8.4.3"/>
    </reaction>
</comment>
<comment type="cofactor">
    <cofactor evidence="1">
        <name>[4Fe-4S] cluster</name>
        <dbReference type="ChEBI" id="CHEBI:49883"/>
    </cofactor>
    <text evidence="1">Binds 2 [4Fe-4S] clusters. One cluster is coordinated with 3 cysteines and an exchangeable S-adenosyl-L-methionine.</text>
</comment>
<comment type="subunit">
    <text evidence="1">Monomer.</text>
</comment>
<comment type="subcellular location">
    <subcellularLocation>
        <location evidence="1">Cytoplasm</location>
    </subcellularLocation>
</comment>
<comment type="similarity">
    <text evidence="1">Belongs to the methylthiotransferase family. MiaB subfamily.</text>
</comment>
<comment type="sequence caution" evidence="4">
    <conflict type="erroneous initiation">
        <sequence resource="EMBL-CDS" id="AAW76020"/>
    </conflict>
</comment>
<protein>
    <recommendedName>
        <fullName evidence="1">tRNA-2-methylthio-N(6)-dimethylallyladenosine synthase</fullName>
        <ecNumber evidence="1">2.8.4.3</ecNumber>
    </recommendedName>
    <alternativeName>
        <fullName evidence="1">(Dimethylallyl)adenosine tRNA methylthiotransferase MiaB</fullName>
    </alternativeName>
    <alternativeName>
        <fullName evidence="1">tRNA-i(6)A37 methylthiotransferase</fullName>
    </alternativeName>
</protein>
<name>MIAB_XANOR</name>